<accession>Q11CW3</accession>
<comment type="function">
    <text evidence="1">Catalyzes the stereoinversion of LL-2,6-diaminopimelate (L,L-DAP) to meso-diaminopimelate (meso-DAP), a precursor of L-lysine and an essential component of the bacterial peptidoglycan.</text>
</comment>
<comment type="catalytic activity">
    <reaction evidence="1">
        <text>(2S,6S)-2,6-diaminopimelate = meso-2,6-diaminopimelate</text>
        <dbReference type="Rhea" id="RHEA:15393"/>
        <dbReference type="ChEBI" id="CHEBI:57609"/>
        <dbReference type="ChEBI" id="CHEBI:57791"/>
        <dbReference type="EC" id="5.1.1.7"/>
    </reaction>
</comment>
<comment type="pathway">
    <text evidence="1">Amino-acid biosynthesis; L-lysine biosynthesis via DAP pathway; DL-2,6-diaminopimelate from LL-2,6-diaminopimelate: step 1/1.</text>
</comment>
<comment type="subunit">
    <text evidence="1">Homodimer.</text>
</comment>
<comment type="subcellular location">
    <subcellularLocation>
        <location evidence="1">Cytoplasm</location>
    </subcellularLocation>
</comment>
<comment type="similarity">
    <text evidence="1">Belongs to the diaminopimelate epimerase family.</text>
</comment>
<reference key="1">
    <citation type="submission" date="2006-06" db="EMBL/GenBank/DDBJ databases">
        <title>Complete sequence of chromosome of Mesorhizobium sp. BNC1.</title>
        <authorList>
            <consortium name="US DOE Joint Genome Institute"/>
            <person name="Copeland A."/>
            <person name="Lucas S."/>
            <person name="Lapidus A."/>
            <person name="Barry K."/>
            <person name="Detter J.C."/>
            <person name="Glavina del Rio T."/>
            <person name="Hammon N."/>
            <person name="Israni S."/>
            <person name="Dalin E."/>
            <person name="Tice H."/>
            <person name="Pitluck S."/>
            <person name="Chertkov O."/>
            <person name="Brettin T."/>
            <person name="Bruce D."/>
            <person name="Han C."/>
            <person name="Tapia R."/>
            <person name="Gilna P."/>
            <person name="Schmutz J."/>
            <person name="Larimer F."/>
            <person name="Land M."/>
            <person name="Hauser L."/>
            <person name="Kyrpides N."/>
            <person name="Mikhailova N."/>
            <person name="Richardson P."/>
        </authorList>
    </citation>
    <scope>NUCLEOTIDE SEQUENCE [LARGE SCALE GENOMIC DNA]</scope>
    <source>
        <strain>BNC1</strain>
    </source>
</reference>
<proteinExistence type="inferred from homology"/>
<organism>
    <name type="scientific">Chelativorans sp. (strain BNC1)</name>
    <dbReference type="NCBI Taxonomy" id="266779"/>
    <lineage>
        <taxon>Bacteria</taxon>
        <taxon>Pseudomonadati</taxon>
        <taxon>Pseudomonadota</taxon>
        <taxon>Alphaproteobacteria</taxon>
        <taxon>Hyphomicrobiales</taxon>
        <taxon>Phyllobacteriaceae</taxon>
        <taxon>Chelativorans</taxon>
    </lineage>
</organism>
<gene>
    <name evidence="1" type="primary">dapF</name>
    <name type="ordered locus">Meso_3391</name>
</gene>
<name>DAPF_CHESB</name>
<evidence type="ECO:0000255" key="1">
    <source>
        <dbReference type="HAMAP-Rule" id="MF_00197"/>
    </source>
</evidence>
<sequence length="293" mass="31881">MAELAQFAKMNGLGNAIIVADMRGRADRVRPEAAQRLASDPATHFDQIMAIHDPRLEGTENYIEIINSDGSVAQACGNGMRCVVQRLAAETGRPSFTFETIAGVLSAEEHANGLISVDMGKPRFGWQDIPLAEEFHDTRKIELQVGPIDKPVLHSPSVASMGNPHAIFWVEDDPYSYDLERFGPMLENHPIFPERANITIARVDSPEELTMRTWERGAGLTLACGSAACAAAVSAARTGRTGRGVKVNLPGGSLEILWRDDDHVIMTGPAEWEFSGRFDPATGAWERETEGAA</sequence>
<dbReference type="EC" id="5.1.1.7" evidence="1"/>
<dbReference type="EMBL" id="CP000390">
    <property type="protein sequence ID" value="ABG64762.1"/>
    <property type="molecule type" value="Genomic_DNA"/>
</dbReference>
<dbReference type="SMR" id="Q11CW3"/>
<dbReference type="STRING" id="266779.Meso_3391"/>
<dbReference type="KEGG" id="mes:Meso_3391"/>
<dbReference type="eggNOG" id="COG0253">
    <property type="taxonomic scope" value="Bacteria"/>
</dbReference>
<dbReference type="HOGENOM" id="CLU_053306_1_0_5"/>
<dbReference type="OrthoDB" id="9805408at2"/>
<dbReference type="UniPathway" id="UPA00034">
    <property type="reaction ID" value="UER00025"/>
</dbReference>
<dbReference type="GO" id="GO:0005829">
    <property type="term" value="C:cytosol"/>
    <property type="evidence" value="ECO:0007669"/>
    <property type="project" value="TreeGrafter"/>
</dbReference>
<dbReference type="GO" id="GO:0008837">
    <property type="term" value="F:diaminopimelate epimerase activity"/>
    <property type="evidence" value="ECO:0007669"/>
    <property type="project" value="UniProtKB-UniRule"/>
</dbReference>
<dbReference type="GO" id="GO:0009089">
    <property type="term" value="P:lysine biosynthetic process via diaminopimelate"/>
    <property type="evidence" value="ECO:0007669"/>
    <property type="project" value="UniProtKB-UniRule"/>
</dbReference>
<dbReference type="FunFam" id="3.10.310.10:FF:000004">
    <property type="entry name" value="Diaminopimelate epimerase"/>
    <property type="match status" value="1"/>
</dbReference>
<dbReference type="Gene3D" id="3.10.310.10">
    <property type="entry name" value="Diaminopimelate Epimerase, Chain A, domain 1"/>
    <property type="match status" value="2"/>
</dbReference>
<dbReference type="HAMAP" id="MF_00197">
    <property type="entry name" value="DAP_epimerase"/>
    <property type="match status" value="1"/>
</dbReference>
<dbReference type="InterPro" id="IPR018510">
    <property type="entry name" value="DAP_epimerase_AS"/>
</dbReference>
<dbReference type="InterPro" id="IPR001653">
    <property type="entry name" value="DAP_epimerase_DapF"/>
</dbReference>
<dbReference type="NCBIfam" id="TIGR00652">
    <property type="entry name" value="DapF"/>
    <property type="match status" value="1"/>
</dbReference>
<dbReference type="PANTHER" id="PTHR31689:SF0">
    <property type="entry name" value="DIAMINOPIMELATE EPIMERASE"/>
    <property type="match status" value="1"/>
</dbReference>
<dbReference type="PANTHER" id="PTHR31689">
    <property type="entry name" value="DIAMINOPIMELATE EPIMERASE, CHLOROPLASTIC"/>
    <property type="match status" value="1"/>
</dbReference>
<dbReference type="Pfam" id="PF01678">
    <property type="entry name" value="DAP_epimerase"/>
    <property type="match status" value="2"/>
</dbReference>
<dbReference type="SUPFAM" id="SSF54506">
    <property type="entry name" value="Diaminopimelate epimerase-like"/>
    <property type="match status" value="2"/>
</dbReference>
<dbReference type="PROSITE" id="PS01326">
    <property type="entry name" value="DAP_EPIMERASE"/>
    <property type="match status" value="1"/>
</dbReference>
<feature type="chain" id="PRO_1000011902" description="Diaminopimelate epimerase">
    <location>
        <begin position="1"/>
        <end position="293"/>
    </location>
</feature>
<feature type="active site" description="Proton donor" evidence="1">
    <location>
        <position position="76"/>
    </location>
</feature>
<feature type="active site" description="Proton acceptor" evidence="1">
    <location>
        <position position="224"/>
    </location>
</feature>
<feature type="binding site" evidence="1">
    <location>
        <position position="15"/>
    </location>
    <ligand>
        <name>substrate</name>
    </ligand>
</feature>
<feature type="binding site" evidence="1">
    <location>
        <position position="47"/>
    </location>
    <ligand>
        <name>substrate</name>
    </ligand>
</feature>
<feature type="binding site" evidence="1">
    <location>
        <position position="67"/>
    </location>
    <ligand>
        <name>substrate</name>
    </ligand>
</feature>
<feature type="binding site" evidence="1">
    <location>
        <begin position="77"/>
        <end position="78"/>
    </location>
    <ligand>
        <name>substrate</name>
    </ligand>
</feature>
<feature type="binding site" evidence="1">
    <location>
        <position position="163"/>
    </location>
    <ligand>
        <name>substrate</name>
    </ligand>
</feature>
<feature type="binding site" evidence="1">
    <location>
        <position position="197"/>
    </location>
    <ligand>
        <name>substrate</name>
    </ligand>
</feature>
<feature type="binding site" evidence="1">
    <location>
        <begin position="215"/>
        <end position="216"/>
    </location>
    <ligand>
        <name>substrate</name>
    </ligand>
</feature>
<feature type="binding site" evidence="1">
    <location>
        <begin position="225"/>
        <end position="226"/>
    </location>
    <ligand>
        <name>substrate</name>
    </ligand>
</feature>
<feature type="site" description="Could be important to modulate the pK values of the two catalytic cysteine residues" evidence="1">
    <location>
        <position position="165"/>
    </location>
</feature>
<feature type="site" description="Could be important to modulate the pK values of the two catalytic cysteine residues" evidence="1">
    <location>
        <position position="215"/>
    </location>
</feature>
<keyword id="KW-0028">Amino-acid biosynthesis</keyword>
<keyword id="KW-0963">Cytoplasm</keyword>
<keyword id="KW-0413">Isomerase</keyword>
<keyword id="KW-0457">Lysine biosynthesis</keyword>
<protein>
    <recommendedName>
        <fullName evidence="1">Diaminopimelate epimerase</fullName>
        <shortName evidence="1">DAP epimerase</shortName>
        <ecNumber evidence="1">5.1.1.7</ecNumber>
    </recommendedName>
    <alternativeName>
        <fullName evidence="1">PLP-independent amino acid racemase</fullName>
    </alternativeName>
</protein>